<reference key="1">
    <citation type="journal article" date="1991" name="Biochem. Biophys. Res. Commun.">
        <title>Molecular characterization of the interleukin-8 receptor.</title>
        <authorList>
            <person name="Beckmann M.P."/>
            <person name="Munger W.E."/>
            <person name="Kozlosky C."/>
            <person name="Vanden Bos T."/>
            <person name="Price V."/>
            <person name="Lyman S."/>
            <person name="Gerard N.P."/>
            <person name="Gerard C."/>
            <person name="Cerretti D.P."/>
        </authorList>
    </citation>
    <scope>NUCLEOTIDE SEQUENCE [GENOMIC DNA]</scope>
</reference>
<reference key="2">
    <citation type="journal article" date="1990" name="J. Biol. Chem.">
        <title>Molecular cloning of the fMet-Leu-Phe receptor from neutrophils.</title>
        <authorList>
            <person name="Thomas K.M."/>
            <person name="Pyun H.Y."/>
            <person name="Navarro J."/>
        </authorList>
    </citation>
    <scope>NUCLEOTIDE SEQUENCE [MRNA]</scope>
    <source>
        <strain>Albino</strain>
        <tissue>Neutrophil</tissue>
    </source>
</reference>
<reference key="3">
    <citation type="journal article" date="1992" name="J. Immunol.">
        <title>Characterization of complementary DNA clones encoding the rabbit IL-8 receptor.</title>
        <authorList>
            <person name="Lee J."/>
            <person name="Kuang W.-J."/>
            <person name="Rice G.C."/>
            <person name="Wood W.I."/>
        </authorList>
    </citation>
    <scope>NUCLEOTIDE SEQUENCE [MRNA]</scope>
    <source>
        <tissue>Neutrophil</tissue>
    </source>
</reference>
<feature type="chain" id="PRO_0000069332" description="C-X-C chemokine receptor type 1">
    <location>
        <begin position="1"/>
        <end position="355"/>
    </location>
</feature>
<feature type="topological domain" description="Extracellular" evidence="2">
    <location>
        <begin position="1"/>
        <end position="40"/>
    </location>
</feature>
<feature type="transmembrane region" description="Helical; Name=1" evidence="2">
    <location>
        <begin position="41"/>
        <end position="67"/>
    </location>
</feature>
<feature type="topological domain" description="Cytoplasmic" evidence="2">
    <location>
        <begin position="68"/>
        <end position="73"/>
    </location>
</feature>
<feature type="transmembrane region" description="Helical; Name=2" evidence="2">
    <location>
        <begin position="74"/>
        <end position="92"/>
    </location>
</feature>
<feature type="topological domain" description="Extracellular" evidence="2">
    <location>
        <begin position="93"/>
        <end position="114"/>
    </location>
</feature>
<feature type="transmembrane region" description="Helical; Name=3" evidence="2">
    <location>
        <begin position="115"/>
        <end position="138"/>
    </location>
</feature>
<feature type="topological domain" description="Cytoplasmic" evidence="2">
    <location>
        <begin position="139"/>
        <end position="159"/>
    </location>
</feature>
<feature type="transmembrane region" description="Helical; Name=4" evidence="2">
    <location>
        <begin position="160"/>
        <end position="184"/>
    </location>
</feature>
<feature type="topological domain" description="Extracellular" evidence="2">
    <location>
        <begin position="185"/>
        <end position="204"/>
    </location>
</feature>
<feature type="transmembrane region" description="Helical; Name=5" evidence="2">
    <location>
        <begin position="205"/>
        <end position="232"/>
    </location>
</feature>
<feature type="topological domain" description="Cytoplasmic" evidence="2">
    <location>
        <begin position="233"/>
        <end position="247"/>
    </location>
</feature>
<feature type="transmembrane region" description="Helical; Name=6" evidence="2">
    <location>
        <begin position="248"/>
        <end position="270"/>
    </location>
</feature>
<feature type="topological domain" description="Extracellular" evidence="2">
    <location>
        <begin position="271"/>
        <end position="290"/>
    </location>
</feature>
<feature type="transmembrane region" description="Helical; Name=7" evidence="2">
    <location>
        <begin position="291"/>
        <end position="313"/>
    </location>
</feature>
<feature type="topological domain" description="Cytoplasmic" evidence="2">
    <location>
        <begin position="314"/>
        <end position="355"/>
    </location>
</feature>
<feature type="glycosylation site" description="N-linked (GlcNAc...) asparagine" evidence="2">
    <location>
        <position position="7"/>
    </location>
</feature>
<feature type="glycosylation site" description="N-linked (GlcNAc...) asparagine" evidence="2">
    <location>
        <position position="21"/>
    </location>
</feature>
<feature type="disulfide bond" evidence="3">
    <location>
        <begin position="115"/>
        <end position="192"/>
    </location>
</feature>
<feature type="sequence conflict" description="In Ref. 2; AAA31377." evidence="4" ref="2">
    <original>DLLFALTMPIWAVSKEKGWIFG</original>
    <variation>PAFCPDHAYLGRLQGKRLDFR</variation>
    <location>
        <begin position="90"/>
        <end position="111"/>
    </location>
</feature>
<feature type="sequence conflict" description="In Ref. 2; AAA31377." evidence="4" ref="2">
    <original>HA</original>
    <variation>QS</variation>
    <location>
        <begin position="146"/>
        <end position="147"/>
    </location>
</feature>
<feature type="sequence conflict" description="In Ref. 2; AAA31377." evidence="4" ref="2">
    <original>R</original>
    <variation>C</variation>
    <location>
        <position position="204"/>
    </location>
</feature>
<feature type="sequence conflict" description="In Ref. 2; AAA31377." evidence="4" ref="2">
    <original>DI</original>
    <variation>EL</variation>
    <location>
        <begin position="287"/>
        <end position="288"/>
    </location>
</feature>
<dbReference type="EMBL" id="M74240">
    <property type="protein sequence ID" value="AAA31375.1"/>
    <property type="molecule type" value="Genomic_DNA"/>
</dbReference>
<dbReference type="EMBL" id="M58021">
    <property type="protein sequence ID" value="AAA31377.1"/>
    <property type="molecule type" value="mRNA"/>
</dbReference>
<dbReference type="EMBL" id="M82873">
    <property type="protein sequence ID" value="AAA31376.1"/>
    <property type="molecule type" value="mRNA"/>
</dbReference>
<dbReference type="PIR" id="A23669">
    <property type="entry name" value="A23669"/>
</dbReference>
<dbReference type="PIR" id="JQ1231">
    <property type="entry name" value="JQ1231"/>
</dbReference>
<dbReference type="RefSeq" id="NP_001164553.1">
    <property type="nucleotide sequence ID" value="NM_001171082.1"/>
</dbReference>
<dbReference type="RefSeq" id="XP_017198124.1">
    <property type="nucleotide sequence ID" value="XM_017342635.3"/>
</dbReference>
<dbReference type="SMR" id="P21109"/>
<dbReference type="STRING" id="9986.ENSOCUP00000027727"/>
<dbReference type="GlyCosmos" id="P21109">
    <property type="glycosylation" value="2 sites, No reported glycans"/>
</dbReference>
<dbReference type="Ensembl" id="ENSOCUT00000015104.3">
    <property type="protein sequence ID" value="ENSOCUP00000027727.1"/>
    <property type="gene ID" value="ENSOCUG00000015108.3"/>
</dbReference>
<dbReference type="GeneID" id="100328622"/>
<dbReference type="KEGG" id="ocu:100328622"/>
<dbReference type="CTD" id="3577"/>
<dbReference type="GeneTree" id="ENSGT01050000244848"/>
<dbReference type="InParanoid" id="P21109"/>
<dbReference type="OrthoDB" id="9946013at2759"/>
<dbReference type="Proteomes" id="UP000001811">
    <property type="component" value="Chromosome 7"/>
</dbReference>
<dbReference type="Bgee" id="ENSOCUG00000015108">
    <property type="expression patterns" value="Expressed in blood and 19 other cell types or tissues"/>
</dbReference>
<dbReference type="GO" id="GO:0009897">
    <property type="term" value="C:external side of plasma membrane"/>
    <property type="evidence" value="ECO:0007669"/>
    <property type="project" value="TreeGrafter"/>
</dbReference>
<dbReference type="GO" id="GO:0019957">
    <property type="term" value="F:C-C chemokine binding"/>
    <property type="evidence" value="ECO:0007669"/>
    <property type="project" value="TreeGrafter"/>
</dbReference>
<dbReference type="GO" id="GO:0016493">
    <property type="term" value="F:C-C chemokine receptor activity"/>
    <property type="evidence" value="ECO:0007669"/>
    <property type="project" value="TreeGrafter"/>
</dbReference>
<dbReference type="GO" id="GO:0019959">
    <property type="term" value="F:interleukin-8 binding"/>
    <property type="evidence" value="ECO:0007669"/>
    <property type="project" value="Ensembl"/>
</dbReference>
<dbReference type="GO" id="GO:0004918">
    <property type="term" value="F:interleukin-8 receptor activity"/>
    <property type="evidence" value="ECO:0007669"/>
    <property type="project" value="Ensembl"/>
</dbReference>
<dbReference type="GO" id="GO:0019722">
    <property type="term" value="P:calcium-mediated signaling"/>
    <property type="evidence" value="ECO:0007669"/>
    <property type="project" value="TreeGrafter"/>
</dbReference>
<dbReference type="GO" id="GO:0006955">
    <property type="term" value="P:immune response"/>
    <property type="evidence" value="ECO:0007669"/>
    <property type="project" value="TreeGrafter"/>
</dbReference>
<dbReference type="GO" id="GO:0030593">
    <property type="term" value="P:neutrophil chemotaxis"/>
    <property type="evidence" value="ECO:0007669"/>
    <property type="project" value="TreeGrafter"/>
</dbReference>
<dbReference type="GO" id="GO:0007204">
    <property type="term" value="P:positive regulation of cytosolic calcium ion concentration"/>
    <property type="evidence" value="ECO:0007669"/>
    <property type="project" value="TreeGrafter"/>
</dbReference>
<dbReference type="GO" id="GO:0031623">
    <property type="term" value="P:receptor internalization"/>
    <property type="evidence" value="ECO:0007669"/>
    <property type="project" value="Ensembl"/>
</dbReference>
<dbReference type="CDD" id="cd15178">
    <property type="entry name" value="7tmA_CXCR1_2"/>
    <property type="match status" value="1"/>
</dbReference>
<dbReference type="FunFam" id="1.20.1070.10:FF:000157">
    <property type="entry name" value="C-X-C chemokine receptor type 2"/>
    <property type="match status" value="1"/>
</dbReference>
<dbReference type="Gene3D" id="1.20.1070.10">
    <property type="entry name" value="Rhodopsin 7-helix transmembrane proteins"/>
    <property type="match status" value="1"/>
</dbReference>
<dbReference type="InterPro" id="IPR050119">
    <property type="entry name" value="CCR1-9-like"/>
</dbReference>
<dbReference type="InterPro" id="IPR001355">
    <property type="entry name" value="Chemokine_CXCR1"/>
</dbReference>
<dbReference type="InterPro" id="IPR000174">
    <property type="entry name" value="Chemokine_CXCR_1/2"/>
</dbReference>
<dbReference type="InterPro" id="IPR000276">
    <property type="entry name" value="GPCR_Rhodpsn"/>
</dbReference>
<dbReference type="InterPro" id="IPR017452">
    <property type="entry name" value="GPCR_Rhodpsn_7TM"/>
</dbReference>
<dbReference type="PANTHER" id="PTHR10489:SF916">
    <property type="entry name" value="C-X-C CHEMOKINE RECEPTOR TYPE 1"/>
    <property type="match status" value="1"/>
</dbReference>
<dbReference type="PANTHER" id="PTHR10489">
    <property type="entry name" value="CELL ADHESION MOLECULE"/>
    <property type="match status" value="1"/>
</dbReference>
<dbReference type="Pfam" id="PF00001">
    <property type="entry name" value="7tm_1"/>
    <property type="match status" value="1"/>
</dbReference>
<dbReference type="PRINTS" id="PR00237">
    <property type="entry name" value="GPCRRHODOPSN"/>
</dbReference>
<dbReference type="PRINTS" id="PR00427">
    <property type="entry name" value="INTRLEUKIN8R"/>
</dbReference>
<dbReference type="PRINTS" id="PR00572">
    <property type="entry name" value="INTRLEUKN8AR"/>
</dbReference>
<dbReference type="SUPFAM" id="SSF81321">
    <property type="entry name" value="Family A G protein-coupled receptor-like"/>
    <property type="match status" value="1"/>
</dbReference>
<dbReference type="PROSITE" id="PS00237">
    <property type="entry name" value="G_PROTEIN_RECEP_F1_1"/>
    <property type="match status" value="1"/>
</dbReference>
<dbReference type="PROSITE" id="PS50262">
    <property type="entry name" value="G_PROTEIN_RECEP_F1_2"/>
    <property type="match status" value="1"/>
</dbReference>
<accession>P21109</accession>
<gene>
    <name type="primary">CXCR1</name>
    <name type="synonym">IL8RA</name>
</gene>
<proteinExistence type="evidence at transcript level"/>
<comment type="function">
    <text evidence="1">Receptor to interleukin-8, which is a powerful neutrophils chemotactic factor. Binding of IL-8 to the receptor causes activation of neutrophils. This response is mediated via a G-protein that activates a phosphatidylinositol-calcium second messenger system.</text>
</comment>
<comment type="subunit">
    <text evidence="1">Interacts with IL8. Interacts with GNAI2.</text>
</comment>
<comment type="subcellular location">
    <subcellularLocation>
        <location>Cell membrane</location>
        <topology>Multi-pass membrane protein</topology>
    </subcellularLocation>
</comment>
<comment type="tissue specificity">
    <text>Neutrophils.</text>
</comment>
<comment type="similarity">
    <text evidence="3">Belongs to the G-protein coupled receptor 1 family.</text>
</comment>
<comment type="caution">
    <text evidence="5">Was originally thought to be the receptor for fMet-Leu-Phe (N-formyl peptide receptor).</text>
</comment>
<organism>
    <name type="scientific">Oryctolagus cuniculus</name>
    <name type="common">Rabbit</name>
    <dbReference type="NCBI Taxonomy" id="9986"/>
    <lineage>
        <taxon>Eukaryota</taxon>
        <taxon>Metazoa</taxon>
        <taxon>Chordata</taxon>
        <taxon>Craniata</taxon>
        <taxon>Vertebrata</taxon>
        <taxon>Euteleostomi</taxon>
        <taxon>Mammalia</taxon>
        <taxon>Eutheria</taxon>
        <taxon>Euarchontoglires</taxon>
        <taxon>Glires</taxon>
        <taxon>Lagomorpha</taxon>
        <taxon>Leporidae</taxon>
        <taxon>Oryctolagus</taxon>
    </lineage>
</organism>
<sequence>MEVNVWNMTDLWTWFEDEFANATGMPPVEKDYSPCLVVTQTLNKYVVVVIYALVFLLSLLGNSLVMLVILYSRSNRSVTDVYLLNLAMADLLFALTMPIWAVSKEKGWIFGTPLCKVVSLVKEVNFYSGILLLACISVDRYLAIVHATRTLTQKRHLVKFICLGIWALSLILSLPFFLFRQVFSPNNSSPVCYEDLGHNTAKWRMVLRILPHTFGFILPLLVMLFCYGFTLRTLFQAHMGQKHRAMRVIFAVVLIFLLCWLPYNLVLLADTLMRTHVIQETCQRRNDIDRALDATEILGFLHSCLNPIIYAFIGQNFRNGFLKMLAARGLISKEFLTRHRVTSYTSSSTNVPSNL</sequence>
<protein>
    <recommendedName>
        <fullName>C-X-C chemokine receptor type 1</fullName>
        <shortName>CXC-R1</shortName>
        <shortName>CXCR-1</shortName>
    </recommendedName>
    <alternativeName>
        <fullName>High affinity interleukin-8 receptor A</fullName>
        <shortName>IL-8R A</shortName>
    </alternativeName>
    <cdAntigenName>CD181</cdAntigenName>
</protein>
<name>CXCR1_RABIT</name>
<keyword id="KW-1003">Cell membrane</keyword>
<keyword id="KW-0145">Chemotaxis</keyword>
<keyword id="KW-1015">Disulfide bond</keyword>
<keyword id="KW-0297">G-protein coupled receptor</keyword>
<keyword id="KW-0325">Glycoprotein</keyword>
<keyword id="KW-0472">Membrane</keyword>
<keyword id="KW-0675">Receptor</keyword>
<keyword id="KW-1185">Reference proteome</keyword>
<keyword id="KW-0807">Transducer</keyword>
<keyword id="KW-0812">Transmembrane</keyword>
<keyword id="KW-1133">Transmembrane helix</keyword>
<evidence type="ECO:0000250" key="1">
    <source>
        <dbReference type="UniProtKB" id="P25024"/>
    </source>
</evidence>
<evidence type="ECO:0000255" key="2"/>
<evidence type="ECO:0000255" key="3">
    <source>
        <dbReference type="PROSITE-ProRule" id="PRU00521"/>
    </source>
</evidence>
<evidence type="ECO:0000305" key="4"/>
<evidence type="ECO:0000305" key="5">
    <source>
    </source>
</evidence>